<protein>
    <recommendedName>
        <fullName evidence="1">ATP-dependent dethiobiotin synthetase BioD</fullName>
        <ecNumber evidence="1">6.3.3.3</ecNumber>
    </recommendedName>
    <alternativeName>
        <fullName evidence="1">DTB synthetase</fullName>
        <shortName evidence="1">DTBS</shortName>
    </alternativeName>
    <alternativeName>
        <fullName evidence="1">Dethiobiotin synthase</fullName>
    </alternativeName>
</protein>
<evidence type="ECO:0000255" key="1">
    <source>
        <dbReference type="HAMAP-Rule" id="MF_00336"/>
    </source>
</evidence>
<accession>C1ANK7</accession>
<dbReference type="EC" id="6.3.3.3" evidence="1"/>
<dbReference type="EMBL" id="AP010918">
    <property type="protein sequence ID" value="BAH25886.1"/>
    <property type="molecule type" value="Genomic_DNA"/>
</dbReference>
<dbReference type="RefSeq" id="WP_011799198.1">
    <property type="nucleotide sequence ID" value="NZ_CP014566.1"/>
</dbReference>
<dbReference type="SMR" id="C1ANK7"/>
<dbReference type="KEGG" id="mbt:JTY_1598"/>
<dbReference type="HOGENOM" id="CLU_072551_1_0_11"/>
<dbReference type="UniPathway" id="UPA00078">
    <property type="reaction ID" value="UER00161"/>
</dbReference>
<dbReference type="GO" id="GO:0005829">
    <property type="term" value="C:cytosol"/>
    <property type="evidence" value="ECO:0007669"/>
    <property type="project" value="TreeGrafter"/>
</dbReference>
<dbReference type="GO" id="GO:0005524">
    <property type="term" value="F:ATP binding"/>
    <property type="evidence" value="ECO:0007669"/>
    <property type="project" value="UniProtKB-UniRule"/>
</dbReference>
<dbReference type="GO" id="GO:0004141">
    <property type="term" value="F:dethiobiotin synthase activity"/>
    <property type="evidence" value="ECO:0007669"/>
    <property type="project" value="UniProtKB-UniRule"/>
</dbReference>
<dbReference type="GO" id="GO:0000287">
    <property type="term" value="F:magnesium ion binding"/>
    <property type="evidence" value="ECO:0007669"/>
    <property type="project" value="UniProtKB-UniRule"/>
</dbReference>
<dbReference type="GO" id="GO:0009102">
    <property type="term" value="P:biotin biosynthetic process"/>
    <property type="evidence" value="ECO:0007669"/>
    <property type="project" value="UniProtKB-UniRule"/>
</dbReference>
<dbReference type="FunFam" id="3.40.50.300:FF:002079">
    <property type="entry name" value="ATP-dependent dethiobiotin synthetase BioD"/>
    <property type="match status" value="1"/>
</dbReference>
<dbReference type="Gene3D" id="3.40.50.300">
    <property type="entry name" value="P-loop containing nucleotide triphosphate hydrolases"/>
    <property type="match status" value="1"/>
</dbReference>
<dbReference type="HAMAP" id="MF_00336">
    <property type="entry name" value="BioD"/>
    <property type="match status" value="1"/>
</dbReference>
<dbReference type="InterPro" id="IPR004472">
    <property type="entry name" value="DTB_synth_BioD"/>
</dbReference>
<dbReference type="InterPro" id="IPR027417">
    <property type="entry name" value="P-loop_NTPase"/>
</dbReference>
<dbReference type="NCBIfam" id="TIGR00347">
    <property type="entry name" value="bioD"/>
    <property type="match status" value="1"/>
</dbReference>
<dbReference type="PANTHER" id="PTHR43210">
    <property type="entry name" value="DETHIOBIOTIN SYNTHETASE"/>
    <property type="match status" value="1"/>
</dbReference>
<dbReference type="PANTHER" id="PTHR43210:SF5">
    <property type="entry name" value="DETHIOBIOTIN SYNTHETASE"/>
    <property type="match status" value="1"/>
</dbReference>
<dbReference type="Pfam" id="PF13500">
    <property type="entry name" value="AAA_26"/>
    <property type="match status" value="1"/>
</dbReference>
<dbReference type="SUPFAM" id="SSF52540">
    <property type="entry name" value="P-loop containing nucleoside triphosphate hydrolases"/>
    <property type="match status" value="1"/>
</dbReference>
<keyword id="KW-0067">ATP-binding</keyword>
<keyword id="KW-0093">Biotin biosynthesis</keyword>
<keyword id="KW-0963">Cytoplasm</keyword>
<keyword id="KW-0436">Ligase</keyword>
<keyword id="KW-0460">Magnesium</keyword>
<keyword id="KW-0479">Metal-binding</keyword>
<keyword id="KW-0547">Nucleotide-binding</keyword>
<organism>
    <name type="scientific">Mycobacterium bovis (strain BCG / Tokyo 172 / ATCC 35737 / TMC 1019)</name>
    <dbReference type="NCBI Taxonomy" id="561275"/>
    <lineage>
        <taxon>Bacteria</taxon>
        <taxon>Bacillati</taxon>
        <taxon>Actinomycetota</taxon>
        <taxon>Actinomycetes</taxon>
        <taxon>Mycobacteriales</taxon>
        <taxon>Mycobacteriaceae</taxon>
        <taxon>Mycobacterium</taxon>
        <taxon>Mycobacterium tuberculosis complex</taxon>
    </lineage>
</organism>
<reference key="1">
    <citation type="journal article" date="2009" name="Vaccine">
        <title>Whole genome sequence analysis of Mycobacterium bovis bacillus Calmette-Guerin (BCG) Tokyo 172: a comparative study of BCG vaccine substrains.</title>
        <authorList>
            <person name="Seki M."/>
            <person name="Honda I."/>
            <person name="Fujita I."/>
            <person name="Yano I."/>
            <person name="Yamamoto S."/>
            <person name="Koyama A."/>
        </authorList>
    </citation>
    <scope>NUCLEOTIDE SEQUENCE [LARGE SCALE GENOMIC DNA]</scope>
    <source>
        <strain>BCG / Tokyo 172 / ATCC 35737 / TMC 1019</strain>
    </source>
</reference>
<comment type="function">
    <text evidence="1">Catalyzes a mechanistically unusual reaction, the ATP-dependent insertion of CO2 between the N7 and N8 nitrogen atoms of 7,8-diaminopelargonic acid (DAPA, also called 7,8-diammoniononanoate) to form a ureido ring.</text>
</comment>
<comment type="catalytic activity">
    <reaction evidence="1">
        <text>(7R,8S)-7,8-diammoniononanoate + CO2 + ATP = (4R,5S)-dethiobiotin + ADP + phosphate + 3 H(+)</text>
        <dbReference type="Rhea" id="RHEA:15805"/>
        <dbReference type="ChEBI" id="CHEBI:15378"/>
        <dbReference type="ChEBI" id="CHEBI:16526"/>
        <dbReference type="ChEBI" id="CHEBI:30616"/>
        <dbReference type="ChEBI" id="CHEBI:43474"/>
        <dbReference type="ChEBI" id="CHEBI:149469"/>
        <dbReference type="ChEBI" id="CHEBI:149473"/>
        <dbReference type="ChEBI" id="CHEBI:456216"/>
        <dbReference type="EC" id="6.3.3.3"/>
    </reaction>
</comment>
<comment type="cofactor">
    <cofactor evidence="1">
        <name>Mg(2+)</name>
        <dbReference type="ChEBI" id="CHEBI:18420"/>
    </cofactor>
</comment>
<comment type="pathway">
    <text evidence="1">Cofactor biosynthesis; biotin biosynthesis; biotin from 7,8-diaminononanoate: step 1/2.</text>
</comment>
<comment type="subunit">
    <text evidence="1">Homodimer.</text>
</comment>
<comment type="subcellular location">
    <subcellularLocation>
        <location evidence="1">Cytoplasm</location>
    </subcellularLocation>
</comment>
<comment type="similarity">
    <text evidence="1">Belongs to the dethiobiotin synthetase family.</text>
</comment>
<proteinExistence type="inferred from homology"/>
<feature type="chain" id="PRO_1000133215" description="ATP-dependent dethiobiotin synthetase BioD">
    <location>
        <begin position="1"/>
        <end position="226"/>
    </location>
</feature>
<feature type="active site" evidence="1">
    <location>
        <position position="37"/>
    </location>
</feature>
<feature type="binding site" evidence="1">
    <location>
        <begin position="12"/>
        <end position="17"/>
    </location>
    <ligand>
        <name>ATP</name>
        <dbReference type="ChEBI" id="CHEBI:30616"/>
    </ligand>
</feature>
<feature type="binding site" evidence="1">
    <location>
        <position position="16"/>
    </location>
    <ligand>
        <name>Mg(2+)</name>
        <dbReference type="ChEBI" id="CHEBI:18420"/>
    </ligand>
</feature>
<feature type="binding site" evidence="1">
    <location>
        <position position="41"/>
    </location>
    <ligand>
        <name>substrate</name>
    </ligand>
</feature>
<feature type="binding site" evidence="1">
    <location>
        <position position="49"/>
    </location>
    <ligand>
        <name>ATP</name>
        <dbReference type="ChEBI" id="CHEBI:30616"/>
    </ligand>
</feature>
<feature type="binding site" evidence="1">
    <location>
        <position position="49"/>
    </location>
    <ligand>
        <name>Mg(2+)</name>
        <dbReference type="ChEBI" id="CHEBI:18420"/>
    </ligand>
</feature>
<feature type="binding site" evidence="1">
    <location>
        <begin position="108"/>
        <end position="111"/>
    </location>
    <ligand>
        <name>ATP</name>
        <dbReference type="ChEBI" id="CHEBI:30616"/>
    </ligand>
</feature>
<feature type="binding site" evidence="1">
    <location>
        <position position="108"/>
    </location>
    <ligand>
        <name>Mg(2+)</name>
        <dbReference type="ChEBI" id="CHEBI:18420"/>
    </ligand>
</feature>
<feature type="binding site" evidence="1">
    <location>
        <begin position="169"/>
        <end position="170"/>
    </location>
    <ligand>
        <name>ATP</name>
        <dbReference type="ChEBI" id="CHEBI:30616"/>
    </ligand>
</feature>
<feature type="binding site" evidence="1">
    <location>
        <begin position="197"/>
        <end position="199"/>
    </location>
    <ligand>
        <name>ATP</name>
        <dbReference type="ChEBI" id="CHEBI:30616"/>
    </ligand>
</feature>
<sequence>MTILVVTGTGTGVGKTVVCAALASAARQAGIDVAVCKPVQTGTARGDDDLAEVGRLAGVTQLAGLARYPQPMAPAAAAEHAGMALPARDQIVRLIADLDRPGRLTLVEGAGGLLVELAEPGVTLRDVAVDVAAVALVVVTADLGTLNHTKLTLEALAAQQVSCAGLVIGSWPDPPGLVAASNRSALARIATVRAALPAGAASLDAGDFAAMSAAAFDRNWVAGLVG</sequence>
<gene>
    <name evidence="1" type="primary">bioD</name>
    <name type="ordered locus">JTY_1598</name>
</gene>
<name>BIOD_MYCBT</name>